<gene>
    <name evidence="1" type="primary">clpX</name>
    <name type="ordered locus">SAOUHSC_01778</name>
</gene>
<keyword id="KW-0067">ATP-binding</keyword>
<keyword id="KW-0143">Chaperone</keyword>
<keyword id="KW-0479">Metal-binding</keyword>
<keyword id="KW-0547">Nucleotide-binding</keyword>
<keyword id="KW-1185">Reference proteome</keyword>
<keyword id="KW-0862">Zinc</keyword>
<comment type="function">
    <text evidence="1">ATP-dependent specificity component of the Clp protease. It directs the protease to specific substrates. Can perform chaperone functions in the absence of ClpP.</text>
</comment>
<comment type="subunit">
    <text evidence="1">Component of the ClpX-ClpP complex. Forms a hexameric ring that, in the presence of ATP, binds to fourteen ClpP subunits assembled into a disk-like structure with a central cavity, resembling the structure of eukaryotic proteasomes.</text>
</comment>
<comment type="similarity">
    <text evidence="1">Belongs to the ClpX chaperone family.</text>
</comment>
<name>CLPX_STAA8</name>
<accession>Q2FXQ7</accession>
<protein>
    <recommendedName>
        <fullName evidence="1">ATP-dependent Clp protease ATP-binding subunit ClpX</fullName>
    </recommendedName>
</protein>
<reference key="1">
    <citation type="book" date="2006" name="Gram positive pathogens, 2nd edition">
        <title>The Staphylococcus aureus NCTC 8325 genome.</title>
        <editorList>
            <person name="Fischetti V."/>
            <person name="Novick R."/>
            <person name="Ferretti J."/>
            <person name="Portnoy D."/>
            <person name="Rood J."/>
        </editorList>
        <authorList>
            <person name="Gillaspy A.F."/>
            <person name="Worrell V."/>
            <person name="Orvis J."/>
            <person name="Roe B.A."/>
            <person name="Dyer D.W."/>
            <person name="Iandolo J.J."/>
        </authorList>
    </citation>
    <scope>NUCLEOTIDE SEQUENCE [LARGE SCALE GENOMIC DNA]</scope>
    <source>
        <strain>NCTC 8325 / PS 47</strain>
    </source>
</reference>
<sequence>MFKFNEDEENLKCSFCGKDQDQVKKLVAGSGVYICNECIELCSEIVEEELAQNTSEAMTELPTPKEIMDHLNEYVIGQEKAKKSLAVAVYNHYKRIQQLGPKEDDVELQKSNIALIGPTGSGKTLLAQTLAKTLNVPFAIADATSLTEAGYVGDDVENILLRLIQAADFDIDKAEKGIIYVDEIDKIARKSENTSITRDVSGEGVQQALLKILEGTTASVPPQGGRKHPNQEMIQIDTTNILFILGGAFDGIEEVIKRRLGEKVIGFSSNEADKYDEQALLAQIRPEDLQAYGLIPEFIGRVPIVANLETLDVTALKNILTQPKNALVKQYTKMLELDDVDLEFTEEALSAISEKAIERKTGARGLRSIIEESLIDIMFDVPSNENVTKVVITAQTINEETEPELYDAEGNLINNSKTSA</sequence>
<dbReference type="EMBL" id="CP000253">
    <property type="protein sequence ID" value="ABD30847.1"/>
    <property type="molecule type" value="Genomic_DNA"/>
</dbReference>
<dbReference type="RefSeq" id="WP_000472302.1">
    <property type="nucleotide sequence ID" value="NZ_LS483365.1"/>
</dbReference>
<dbReference type="RefSeq" id="YP_500283.1">
    <property type="nucleotide sequence ID" value="NC_007795.1"/>
</dbReference>
<dbReference type="SMR" id="Q2FXQ7"/>
<dbReference type="STRING" id="93061.SAOUHSC_01778"/>
<dbReference type="PaxDb" id="1280-SAXN108_1701"/>
<dbReference type="GeneID" id="3919696"/>
<dbReference type="KEGG" id="sao:SAOUHSC_01778"/>
<dbReference type="PATRIC" id="fig|93061.5.peg.1622"/>
<dbReference type="eggNOG" id="COG1219">
    <property type="taxonomic scope" value="Bacteria"/>
</dbReference>
<dbReference type="HOGENOM" id="CLU_014218_8_2_9"/>
<dbReference type="OrthoDB" id="9804062at2"/>
<dbReference type="PRO" id="PR:Q2FXQ7"/>
<dbReference type="Proteomes" id="UP000008816">
    <property type="component" value="Chromosome"/>
</dbReference>
<dbReference type="GO" id="GO:0009376">
    <property type="term" value="C:HslUV protease complex"/>
    <property type="evidence" value="ECO:0000318"/>
    <property type="project" value="GO_Central"/>
</dbReference>
<dbReference type="GO" id="GO:0005524">
    <property type="term" value="F:ATP binding"/>
    <property type="evidence" value="ECO:0000318"/>
    <property type="project" value="GO_Central"/>
</dbReference>
<dbReference type="GO" id="GO:0016887">
    <property type="term" value="F:ATP hydrolysis activity"/>
    <property type="evidence" value="ECO:0000318"/>
    <property type="project" value="GO_Central"/>
</dbReference>
<dbReference type="GO" id="GO:0140662">
    <property type="term" value="F:ATP-dependent protein folding chaperone"/>
    <property type="evidence" value="ECO:0007669"/>
    <property type="project" value="InterPro"/>
</dbReference>
<dbReference type="GO" id="GO:0046983">
    <property type="term" value="F:protein dimerization activity"/>
    <property type="evidence" value="ECO:0007669"/>
    <property type="project" value="InterPro"/>
</dbReference>
<dbReference type="GO" id="GO:0051082">
    <property type="term" value="F:unfolded protein binding"/>
    <property type="evidence" value="ECO:0007669"/>
    <property type="project" value="UniProtKB-UniRule"/>
</dbReference>
<dbReference type="GO" id="GO:0008270">
    <property type="term" value="F:zinc ion binding"/>
    <property type="evidence" value="ECO:0007669"/>
    <property type="project" value="InterPro"/>
</dbReference>
<dbReference type="GO" id="GO:0051301">
    <property type="term" value="P:cell division"/>
    <property type="evidence" value="ECO:0000318"/>
    <property type="project" value="GO_Central"/>
</dbReference>
<dbReference type="GO" id="GO:0051603">
    <property type="term" value="P:proteolysis involved in protein catabolic process"/>
    <property type="evidence" value="ECO:0000318"/>
    <property type="project" value="GO_Central"/>
</dbReference>
<dbReference type="CDD" id="cd19497">
    <property type="entry name" value="RecA-like_ClpX"/>
    <property type="match status" value="1"/>
</dbReference>
<dbReference type="FunFam" id="1.10.8.60:FF:000002">
    <property type="entry name" value="ATP-dependent Clp protease ATP-binding subunit ClpX"/>
    <property type="match status" value="1"/>
</dbReference>
<dbReference type="FunFam" id="3.40.50.300:FF:000005">
    <property type="entry name" value="ATP-dependent Clp protease ATP-binding subunit ClpX"/>
    <property type="match status" value="1"/>
</dbReference>
<dbReference type="Gene3D" id="1.10.8.60">
    <property type="match status" value="1"/>
</dbReference>
<dbReference type="Gene3D" id="6.20.220.10">
    <property type="entry name" value="ClpX chaperone, C4-type zinc finger domain"/>
    <property type="match status" value="1"/>
</dbReference>
<dbReference type="Gene3D" id="3.40.50.300">
    <property type="entry name" value="P-loop containing nucleotide triphosphate hydrolases"/>
    <property type="match status" value="1"/>
</dbReference>
<dbReference type="HAMAP" id="MF_00175">
    <property type="entry name" value="ClpX"/>
    <property type="match status" value="1"/>
</dbReference>
<dbReference type="InterPro" id="IPR003593">
    <property type="entry name" value="AAA+_ATPase"/>
</dbReference>
<dbReference type="InterPro" id="IPR050052">
    <property type="entry name" value="ATP-dep_Clp_protease_ClpX"/>
</dbReference>
<dbReference type="InterPro" id="IPR003959">
    <property type="entry name" value="ATPase_AAA_core"/>
</dbReference>
<dbReference type="InterPro" id="IPR019489">
    <property type="entry name" value="Clp_ATPase_C"/>
</dbReference>
<dbReference type="InterPro" id="IPR004487">
    <property type="entry name" value="Clp_protease_ATP-bd_su_ClpX"/>
</dbReference>
<dbReference type="InterPro" id="IPR046425">
    <property type="entry name" value="ClpX_bact"/>
</dbReference>
<dbReference type="InterPro" id="IPR027417">
    <property type="entry name" value="P-loop_NTPase"/>
</dbReference>
<dbReference type="InterPro" id="IPR010603">
    <property type="entry name" value="Znf_CppX_C4"/>
</dbReference>
<dbReference type="InterPro" id="IPR038366">
    <property type="entry name" value="Znf_CppX_C4_sf"/>
</dbReference>
<dbReference type="NCBIfam" id="TIGR00382">
    <property type="entry name" value="clpX"/>
    <property type="match status" value="1"/>
</dbReference>
<dbReference type="NCBIfam" id="NF003745">
    <property type="entry name" value="PRK05342.1"/>
    <property type="match status" value="1"/>
</dbReference>
<dbReference type="PANTHER" id="PTHR48102:SF7">
    <property type="entry name" value="ATP-DEPENDENT CLP PROTEASE ATP-BINDING SUBUNIT CLPX-LIKE, MITOCHONDRIAL"/>
    <property type="match status" value="1"/>
</dbReference>
<dbReference type="PANTHER" id="PTHR48102">
    <property type="entry name" value="ATP-DEPENDENT CLP PROTEASE ATP-BINDING SUBUNIT CLPX-LIKE, MITOCHONDRIAL-RELATED"/>
    <property type="match status" value="1"/>
</dbReference>
<dbReference type="Pfam" id="PF07724">
    <property type="entry name" value="AAA_2"/>
    <property type="match status" value="1"/>
</dbReference>
<dbReference type="Pfam" id="PF10431">
    <property type="entry name" value="ClpB_D2-small"/>
    <property type="match status" value="1"/>
</dbReference>
<dbReference type="Pfam" id="PF06689">
    <property type="entry name" value="zf-C4_ClpX"/>
    <property type="match status" value="1"/>
</dbReference>
<dbReference type="SMART" id="SM00382">
    <property type="entry name" value="AAA"/>
    <property type="match status" value="1"/>
</dbReference>
<dbReference type="SMART" id="SM01086">
    <property type="entry name" value="ClpB_D2-small"/>
    <property type="match status" value="1"/>
</dbReference>
<dbReference type="SMART" id="SM00994">
    <property type="entry name" value="zf-C4_ClpX"/>
    <property type="match status" value="1"/>
</dbReference>
<dbReference type="SUPFAM" id="SSF57716">
    <property type="entry name" value="Glucocorticoid receptor-like (DNA-binding domain)"/>
    <property type="match status" value="1"/>
</dbReference>
<dbReference type="SUPFAM" id="SSF52540">
    <property type="entry name" value="P-loop containing nucleoside triphosphate hydrolases"/>
    <property type="match status" value="1"/>
</dbReference>
<dbReference type="PROSITE" id="PS51902">
    <property type="entry name" value="CLPX_ZB"/>
    <property type="match status" value="1"/>
</dbReference>
<proteinExistence type="inferred from homology"/>
<organism>
    <name type="scientific">Staphylococcus aureus (strain NCTC 8325 / PS 47)</name>
    <dbReference type="NCBI Taxonomy" id="93061"/>
    <lineage>
        <taxon>Bacteria</taxon>
        <taxon>Bacillati</taxon>
        <taxon>Bacillota</taxon>
        <taxon>Bacilli</taxon>
        <taxon>Bacillales</taxon>
        <taxon>Staphylococcaceae</taxon>
        <taxon>Staphylococcus</taxon>
    </lineage>
</organism>
<evidence type="ECO:0000255" key="1">
    <source>
        <dbReference type="HAMAP-Rule" id="MF_00175"/>
    </source>
</evidence>
<evidence type="ECO:0000255" key="2">
    <source>
        <dbReference type="PROSITE-ProRule" id="PRU01250"/>
    </source>
</evidence>
<feature type="chain" id="PRO_1000024672" description="ATP-dependent Clp protease ATP-binding subunit ClpX">
    <location>
        <begin position="1"/>
        <end position="420"/>
    </location>
</feature>
<feature type="domain" description="ClpX-type ZB" evidence="2">
    <location>
        <begin position="1"/>
        <end position="54"/>
    </location>
</feature>
<feature type="binding site" evidence="2">
    <location>
        <position position="13"/>
    </location>
    <ligand>
        <name>Zn(2+)</name>
        <dbReference type="ChEBI" id="CHEBI:29105"/>
    </ligand>
</feature>
<feature type="binding site" evidence="2">
    <location>
        <position position="16"/>
    </location>
    <ligand>
        <name>Zn(2+)</name>
        <dbReference type="ChEBI" id="CHEBI:29105"/>
    </ligand>
</feature>
<feature type="binding site" evidence="2">
    <location>
        <position position="35"/>
    </location>
    <ligand>
        <name>Zn(2+)</name>
        <dbReference type="ChEBI" id="CHEBI:29105"/>
    </ligand>
</feature>
<feature type="binding site" evidence="2">
    <location>
        <position position="38"/>
    </location>
    <ligand>
        <name>Zn(2+)</name>
        <dbReference type="ChEBI" id="CHEBI:29105"/>
    </ligand>
</feature>
<feature type="binding site" evidence="1">
    <location>
        <begin position="118"/>
        <end position="125"/>
    </location>
    <ligand>
        <name>ATP</name>
        <dbReference type="ChEBI" id="CHEBI:30616"/>
    </ligand>
</feature>